<dbReference type="EC" id="3.6.5.-" evidence="1"/>
<dbReference type="EMBL" id="CP000885">
    <property type="protein sequence ID" value="ABX42909.1"/>
    <property type="molecule type" value="Genomic_DNA"/>
</dbReference>
<dbReference type="RefSeq" id="WP_012200562.1">
    <property type="nucleotide sequence ID" value="NC_010001.1"/>
</dbReference>
<dbReference type="SMR" id="A9KMF5"/>
<dbReference type="STRING" id="357809.Cphy_2548"/>
<dbReference type="KEGG" id="cpy:Cphy_2548"/>
<dbReference type="eggNOG" id="COG0536">
    <property type="taxonomic scope" value="Bacteria"/>
</dbReference>
<dbReference type="HOGENOM" id="CLU_011747_2_1_9"/>
<dbReference type="OrthoDB" id="9807318at2"/>
<dbReference type="Proteomes" id="UP000000370">
    <property type="component" value="Chromosome"/>
</dbReference>
<dbReference type="GO" id="GO:0005737">
    <property type="term" value="C:cytoplasm"/>
    <property type="evidence" value="ECO:0007669"/>
    <property type="project" value="UniProtKB-SubCell"/>
</dbReference>
<dbReference type="GO" id="GO:0005525">
    <property type="term" value="F:GTP binding"/>
    <property type="evidence" value="ECO:0007669"/>
    <property type="project" value="UniProtKB-UniRule"/>
</dbReference>
<dbReference type="GO" id="GO:0003924">
    <property type="term" value="F:GTPase activity"/>
    <property type="evidence" value="ECO:0007669"/>
    <property type="project" value="UniProtKB-UniRule"/>
</dbReference>
<dbReference type="GO" id="GO:0000287">
    <property type="term" value="F:magnesium ion binding"/>
    <property type="evidence" value="ECO:0007669"/>
    <property type="project" value="InterPro"/>
</dbReference>
<dbReference type="GO" id="GO:0042254">
    <property type="term" value="P:ribosome biogenesis"/>
    <property type="evidence" value="ECO:0007669"/>
    <property type="project" value="UniProtKB-UniRule"/>
</dbReference>
<dbReference type="CDD" id="cd01898">
    <property type="entry name" value="Obg"/>
    <property type="match status" value="1"/>
</dbReference>
<dbReference type="FunFam" id="2.70.210.12:FF:000001">
    <property type="entry name" value="GTPase Obg"/>
    <property type="match status" value="1"/>
</dbReference>
<dbReference type="Gene3D" id="3.30.300.350">
    <property type="entry name" value="GTP-binding protein OBG, C-terminal domain"/>
    <property type="match status" value="1"/>
</dbReference>
<dbReference type="Gene3D" id="2.70.210.12">
    <property type="entry name" value="GTP1/OBG domain"/>
    <property type="match status" value="1"/>
</dbReference>
<dbReference type="Gene3D" id="3.40.50.300">
    <property type="entry name" value="P-loop containing nucleotide triphosphate hydrolases"/>
    <property type="match status" value="1"/>
</dbReference>
<dbReference type="HAMAP" id="MF_01454">
    <property type="entry name" value="GTPase_Obg"/>
    <property type="match status" value="1"/>
</dbReference>
<dbReference type="InterPro" id="IPR031167">
    <property type="entry name" value="G_OBG"/>
</dbReference>
<dbReference type="InterPro" id="IPR006073">
    <property type="entry name" value="GTP-bd"/>
</dbReference>
<dbReference type="InterPro" id="IPR014100">
    <property type="entry name" value="GTP-bd_Obg/CgtA"/>
</dbReference>
<dbReference type="InterPro" id="IPR036346">
    <property type="entry name" value="GTP-bd_prot_GTP1/OBG_C_sf"/>
</dbReference>
<dbReference type="InterPro" id="IPR006074">
    <property type="entry name" value="GTP1-OBG_CS"/>
</dbReference>
<dbReference type="InterPro" id="IPR006169">
    <property type="entry name" value="GTP1_OBG_dom"/>
</dbReference>
<dbReference type="InterPro" id="IPR036726">
    <property type="entry name" value="GTP1_OBG_dom_sf"/>
</dbReference>
<dbReference type="InterPro" id="IPR045086">
    <property type="entry name" value="OBG_GTPase"/>
</dbReference>
<dbReference type="InterPro" id="IPR015349">
    <property type="entry name" value="OCT_dom"/>
</dbReference>
<dbReference type="InterPro" id="IPR027417">
    <property type="entry name" value="P-loop_NTPase"/>
</dbReference>
<dbReference type="InterPro" id="IPR005225">
    <property type="entry name" value="Small_GTP-bd"/>
</dbReference>
<dbReference type="NCBIfam" id="TIGR02729">
    <property type="entry name" value="Obg_CgtA"/>
    <property type="match status" value="1"/>
</dbReference>
<dbReference type="NCBIfam" id="TIGR03595">
    <property type="entry name" value="Obg_CgtA_exten"/>
    <property type="match status" value="1"/>
</dbReference>
<dbReference type="NCBIfam" id="NF008954">
    <property type="entry name" value="PRK12296.1"/>
    <property type="match status" value="1"/>
</dbReference>
<dbReference type="NCBIfam" id="NF008955">
    <property type="entry name" value="PRK12297.1"/>
    <property type="match status" value="1"/>
</dbReference>
<dbReference type="NCBIfam" id="NF008956">
    <property type="entry name" value="PRK12299.1"/>
    <property type="match status" value="1"/>
</dbReference>
<dbReference type="NCBIfam" id="TIGR00231">
    <property type="entry name" value="small_GTP"/>
    <property type="match status" value="1"/>
</dbReference>
<dbReference type="PANTHER" id="PTHR11702">
    <property type="entry name" value="DEVELOPMENTALLY REGULATED GTP-BINDING PROTEIN-RELATED"/>
    <property type="match status" value="1"/>
</dbReference>
<dbReference type="PANTHER" id="PTHR11702:SF31">
    <property type="entry name" value="MITOCHONDRIAL RIBOSOME-ASSOCIATED GTPASE 2"/>
    <property type="match status" value="1"/>
</dbReference>
<dbReference type="Pfam" id="PF09269">
    <property type="entry name" value="DUF1967"/>
    <property type="match status" value="1"/>
</dbReference>
<dbReference type="Pfam" id="PF01018">
    <property type="entry name" value="GTP1_OBG"/>
    <property type="match status" value="1"/>
</dbReference>
<dbReference type="Pfam" id="PF01926">
    <property type="entry name" value="MMR_HSR1"/>
    <property type="match status" value="1"/>
</dbReference>
<dbReference type="PRINTS" id="PR00326">
    <property type="entry name" value="GTP1OBG"/>
</dbReference>
<dbReference type="SUPFAM" id="SSF102741">
    <property type="entry name" value="Obg GTP-binding protein C-terminal domain"/>
    <property type="match status" value="1"/>
</dbReference>
<dbReference type="SUPFAM" id="SSF82051">
    <property type="entry name" value="Obg GTP-binding protein N-terminal domain"/>
    <property type="match status" value="1"/>
</dbReference>
<dbReference type="SUPFAM" id="SSF52540">
    <property type="entry name" value="P-loop containing nucleoside triphosphate hydrolases"/>
    <property type="match status" value="1"/>
</dbReference>
<dbReference type="PROSITE" id="PS51710">
    <property type="entry name" value="G_OBG"/>
    <property type="match status" value="1"/>
</dbReference>
<dbReference type="PROSITE" id="PS00905">
    <property type="entry name" value="GTP1_OBG"/>
    <property type="match status" value="1"/>
</dbReference>
<dbReference type="PROSITE" id="PS51883">
    <property type="entry name" value="OBG"/>
    <property type="match status" value="1"/>
</dbReference>
<dbReference type="PROSITE" id="PS51881">
    <property type="entry name" value="OCT"/>
    <property type="match status" value="1"/>
</dbReference>
<gene>
    <name evidence="1" type="primary">obg</name>
    <name type="ordered locus">Cphy_2548</name>
</gene>
<keyword id="KW-0963">Cytoplasm</keyword>
<keyword id="KW-0342">GTP-binding</keyword>
<keyword id="KW-0378">Hydrolase</keyword>
<keyword id="KW-0460">Magnesium</keyword>
<keyword id="KW-0479">Metal-binding</keyword>
<keyword id="KW-0547">Nucleotide-binding</keyword>
<keyword id="KW-1185">Reference proteome</keyword>
<protein>
    <recommendedName>
        <fullName evidence="1">GTPase Obg</fullName>
        <ecNumber evidence="1">3.6.5.-</ecNumber>
    </recommendedName>
    <alternativeName>
        <fullName evidence="1">GTP-binding protein Obg</fullName>
    </alternativeName>
</protein>
<reference key="1">
    <citation type="submission" date="2007-11" db="EMBL/GenBank/DDBJ databases">
        <title>Complete genome sequence of Clostridium phytofermentans ISDg.</title>
        <authorList>
            <person name="Leschine S.B."/>
            <person name="Warnick T.A."/>
            <person name="Blanchard J.L."/>
            <person name="Schnell D.J."/>
            <person name="Petit E.L."/>
            <person name="LaTouf W.G."/>
            <person name="Copeland A."/>
            <person name="Lucas S."/>
            <person name="Lapidus A."/>
            <person name="Barry K."/>
            <person name="Glavina del Rio T."/>
            <person name="Dalin E."/>
            <person name="Tice H."/>
            <person name="Pitluck S."/>
            <person name="Kiss H."/>
            <person name="Brettin T."/>
            <person name="Bruce D."/>
            <person name="Detter J.C."/>
            <person name="Han C."/>
            <person name="Kuske C."/>
            <person name="Schmutz J."/>
            <person name="Larimer F."/>
            <person name="Land M."/>
            <person name="Hauser L."/>
            <person name="Kyrpides N."/>
            <person name="Kim E.A."/>
            <person name="Richardson P."/>
        </authorList>
    </citation>
    <scope>NUCLEOTIDE SEQUENCE [LARGE SCALE GENOMIC DNA]</scope>
    <source>
        <strain>ATCC 700394 / DSM 18823 / ISDg</strain>
    </source>
</reference>
<comment type="function">
    <text evidence="1">An essential GTPase which binds GTP, GDP and possibly (p)ppGpp with moderate affinity, with high nucleotide exchange rates and a fairly low GTP hydrolysis rate. Plays a role in control of the cell cycle, stress response, ribosome biogenesis and in those bacteria that undergo differentiation, in morphogenesis control.</text>
</comment>
<comment type="cofactor">
    <cofactor evidence="1">
        <name>Mg(2+)</name>
        <dbReference type="ChEBI" id="CHEBI:18420"/>
    </cofactor>
</comment>
<comment type="subunit">
    <text evidence="1">Monomer.</text>
</comment>
<comment type="subcellular location">
    <subcellularLocation>
        <location evidence="1">Cytoplasm</location>
    </subcellularLocation>
</comment>
<comment type="similarity">
    <text evidence="1">Belongs to the TRAFAC class OBG-HflX-like GTPase superfamily. OBG GTPase family.</text>
</comment>
<name>OBG_LACP7</name>
<accession>A9KMF5</accession>
<organism>
    <name type="scientific">Lachnoclostridium phytofermentans (strain ATCC 700394 / DSM 18823 / ISDg)</name>
    <name type="common">Clostridium phytofermentans</name>
    <dbReference type="NCBI Taxonomy" id="357809"/>
    <lineage>
        <taxon>Bacteria</taxon>
        <taxon>Bacillati</taxon>
        <taxon>Bacillota</taxon>
        <taxon>Clostridia</taxon>
        <taxon>Lachnospirales</taxon>
        <taxon>Lachnospiraceae</taxon>
    </lineage>
</organism>
<sequence>MFADSAKIFIRSGKGGDGHVSFRREIFVPAGGPDGGDGGKGGNVIFEVDEGLNTLGDFRLKRKYSAGDGENGQKKRCSGKDGEDLIIKVPEGTIIKETETGKVITDMSHENRREVILRGGRGGKGNQHYATPTMQVPKYAQPGQKAMELNVTLELKVIADVGLVGFPNVGKSTLLSRVTNAKPKIANYHFTTLNPNLGVVDLDGADGFVIADIPGLIEGASEGIGLGHEFLKHIERTRVIIHLVDAASTEGRDPVEDIEKINHELSSYNEGLLLKPQVIAANKTDVLYGEEEEEAINKIKEAFESKGIKVFPISAVSGQGVKELLYYVSDLLKTVDATPIVFEKEYFPEENLVMSEPYTVEYNETEEVYVVEGPRIERMLGYTNIDTEKGFEFFQKFLKENGILDQLEELGIGEGDTVRMYGLEFDYYK</sequence>
<feature type="chain" id="PRO_0000385853" description="GTPase Obg">
    <location>
        <begin position="1"/>
        <end position="429"/>
    </location>
</feature>
<feature type="domain" description="Obg" evidence="3">
    <location>
        <begin position="1"/>
        <end position="158"/>
    </location>
</feature>
<feature type="domain" description="OBG-type G" evidence="1">
    <location>
        <begin position="159"/>
        <end position="333"/>
    </location>
</feature>
<feature type="domain" description="OCT" evidence="2">
    <location>
        <begin position="350"/>
        <end position="429"/>
    </location>
</feature>
<feature type="binding site" evidence="1">
    <location>
        <begin position="165"/>
        <end position="172"/>
    </location>
    <ligand>
        <name>GTP</name>
        <dbReference type="ChEBI" id="CHEBI:37565"/>
    </ligand>
</feature>
<feature type="binding site" evidence="1">
    <location>
        <position position="172"/>
    </location>
    <ligand>
        <name>Mg(2+)</name>
        <dbReference type="ChEBI" id="CHEBI:18420"/>
    </ligand>
</feature>
<feature type="binding site" evidence="1">
    <location>
        <begin position="190"/>
        <end position="194"/>
    </location>
    <ligand>
        <name>GTP</name>
        <dbReference type="ChEBI" id="CHEBI:37565"/>
    </ligand>
</feature>
<feature type="binding site" evidence="1">
    <location>
        <position position="192"/>
    </location>
    <ligand>
        <name>Mg(2+)</name>
        <dbReference type="ChEBI" id="CHEBI:18420"/>
    </ligand>
</feature>
<feature type="binding site" evidence="1">
    <location>
        <begin position="212"/>
        <end position="215"/>
    </location>
    <ligand>
        <name>GTP</name>
        <dbReference type="ChEBI" id="CHEBI:37565"/>
    </ligand>
</feature>
<feature type="binding site" evidence="1">
    <location>
        <begin position="282"/>
        <end position="285"/>
    </location>
    <ligand>
        <name>GTP</name>
        <dbReference type="ChEBI" id="CHEBI:37565"/>
    </ligand>
</feature>
<feature type="binding site" evidence="1">
    <location>
        <begin position="314"/>
        <end position="316"/>
    </location>
    <ligand>
        <name>GTP</name>
        <dbReference type="ChEBI" id="CHEBI:37565"/>
    </ligand>
</feature>
<proteinExistence type="inferred from homology"/>
<evidence type="ECO:0000255" key="1">
    <source>
        <dbReference type="HAMAP-Rule" id="MF_01454"/>
    </source>
</evidence>
<evidence type="ECO:0000255" key="2">
    <source>
        <dbReference type="PROSITE-ProRule" id="PRU01229"/>
    </source>
</evidence>
<evidence type="ECO:0000255" key="3">
    <source>
        <dbReference type="PROSITE-ProRule" id="PRU01231"/>
    </source>
</evidence>